<accession>A8AEL4</accession>
<evidence type="ECO:0000255" key="1">
    <source>
        <dbReference type="HAMAP-Rule" id="MF_01896"/>
    </source>
</evidence>
<name>SBMC_CITK8</name>
<keyword id="KW-0963">Cytoplasm</keyword>
<keyword id="KW-1185">Reference proteome</keyword>
<keyword id="KW-0346">Stress response</keyword>
<protein>
    <recommendedName>
        <fullName evidence="1">DNA gyrase inhibitor</fullName>
    </recommendedName>
</protein>
<comment type="function">
    <text evidence="1">Inhibits the supercoiling activity of DNA gyrase. Acts by inhibiting DNA gyrase at an early step, prior to (or at the step of) binding of DNA by the gyrase. It protects cells against toxins that target DNA gyrase, by inhibiting activity of these toxins and reducing the formation of lethal double-strand breaks in the cell.</text>
</comment>
<comment type="subunit">
    <text evidence="1">Interacts with DNA gyrase.</text>
</comment>
<comment type="subcellular location">
    <subcellularLocation>
        <location evidence="1">Cytoplasm</location>
    </subcellularLocation>
</comment>
<comment type="similarity">
    <text evidence="1">Belongs to the DNA gyrase inhibitor family.</text>
</comment>
<dbReference type="EMBL" id="CP000822">
    <property type="protein sequence ID" value="ABV11927.1"/>
    <property type="molecule type" value="Genomic_DNA"/>
</dbReference>
<dbReference type="RefSeq" id="WP_012131750.1">
    <property type="nucleotide sequence ID" value="NC_009792.1"/>
</dbReference>
<dbReference type="SMR" id="A8AEL4"/>
<dbReference type="STRING" id="290338.CKO_00775"/>
<dbReference type="GeneID" id="45134974"/>
<dbReference type="KEGG" id="cko:CKO_00775"/>
<dbReference type="HOGENOM" id="CLU_113664_3_2_6"/>
<dbReference type="OrthoDB" id="282744at2"/>
<dbReference type="Proteomes" id="UP000008148">
    <property type="component" value="Chromosome"/>
</dbReference>
<dbReference type="GO" id="GO:0005737">
    <property type="term" value="C:cytoplasm"/>
    <property type="evidence" value="ECO:0007669"/>
    <property type="project" value="UniProtKB-SubCell"/>
</dbReference>
<dbReference type="GO" id="GO:0008657">
    <property type="term" value="F:DNA topoisomerase type II (double strand cut, ATP-hydrolyzing) inhibitor activity"/>
    <property type="evidence" value="ECO:0007669"/>
    <property type="project" value="UniProtKB-UniRule"/>
</dbReference>
<dbReference type="Gene3D" id="3.20.80.10">
    <property type="entry name" value="Regulatory factor, effector binding domain"/>
    <property type="match status" value="1"/>
</dbReference>
<dbReference type="HAMAP" id="MF_01896">
    <property type="entry name" value="DNA_gyrase_inhibitor"/>
    <property type="match status" value="1"/>
</dbReference>
<dbReference type="InterPro" id="IPR010499">
    <property type="entry name" value="AraC_E-bd"/>
</dbReference>
<dbReference type="InterPro" id="IPR050908">
    <property type="entry name" value="DNA_gyrase_inhibitor"/>
</dbReference>
<dbReference type="InterPro" id="IPR024911">
    <property type="entry name" value="DNA_gyrase_inhibitor_GyrI"/>
</dbReference>
<dbReference type="InterPro" id="IPR029442">
    <property type="entry name" value="GyrI-like"/>
</dbReference>
<dbReference type="InterPro" id="IPR011256">
    <property type="entry name" value="Reg_factor_effector_dom_sf"/>
</dbReference>
<dbReference type="NCBIfam" id="NF007451">
    <property type="entry name" value="PRK10016.1"/>
    <property type="match status" value="1"/>
</dbReference>
<dbReference type="PANTHER" id="PTHR40055:SF2">
    <property type="entry name" value="DNA GYRASE INHIBITOR"/>
    <property type="match status" value="1"/>
</dbReference>
<dbReference type="PANTHER" id="PTHR40055">
    <property type="entry name" value="TRANSCRIPTIONAL REGULATOR YGIV-RELATED"/>
    <property type="match status" value="1"/>
</dbReference>
<dbReference type="Pfam" id="PF06445">
    <property type="entry name" value="GyrI-like"/>
    <property type="match status" value="1"/>
</dbReference>
<dbReference type="SMART" id="SM00871">
    <property type="entry name" value="AraC_E_bind"/>
    <property type="match status" value="1"/>
</dbReference>
<dbReference type="SUPFAM" id="SSF55136">
    <property type="entry name" value="Probable bacterial effector-binding domain"/>
    <property type="match status" value="1"/>
</dbReference>
<feature type="chain" id="PRO_0000409690" description="DNA gyrase inhibitor">
    <location>
        <begin position="1"/>
        <end position="155"/>
    </location>
</feature>
<organism>
    <name type="scientific">Citrobacter koseri (strain ATCC BAA-895 / CDC 4225-83 / SGSC4696)</name>
    <dbReference type="NCBI Taxonomy" id="290338"/>
    <lineage>
        <taxon>Bacteria</taxon>
        <taxon>Pseudomonadati</taxon>
        <taxon>Pseudomonadota</taxon>
        <taxon>Gammaproteobacteria</taxon>
        <taxon>Enterobacterales</taxon>
        <taxon>Enterobacteriaceae</taxon>
        <taxon>Citrobacter</taxon>
    </lineage>
</organism>
<gene>
    <name evidence="1" type="primary">sbmC</name>
    <name type="ordered locus">CKO_00775</name>
</gene>
<proteinExistence type="inferred from homology"/>
<reference key="1">
    <citation type="submission" date="2007-08" db="EMBL/GenBank/DDBJ databases">
        <authorList>
            <consortium name="The Citrobacter koseri Genome Sequencing Project"/>
            <person name="McClelland M."/>
            <person name="Sanderson E.K."/>
            <person name="Porwollik S."/>
            <person name="Spieth J."/>
            <person name="Clifton W.S."/>
            <person name="Latreille P."/>
            <person name="Courtney L."/>
            <person name="Wang C."/>
            <person name="Pepin K."/>
            <person name="Bhonagiri V."/>
            <person name="Nash W."/>
            <person name="Johnson M."/>
            <person name="Thiruvilangam P."/>
            <person name="Wilson R."/>
        </authorList>
    </citation>
    <scope>NUCLEOTIDE SEQUENCE [LARGE SCALE GENOMIC DNA]</scope>
    <source>
        <strain>ATCC BAA-895 / CDC 4225-83 / SGSC4696</strain>
    </source>
</reference>
<sequence>MDYEIRQAEKRNIAGFHMVGPWEKTVKQGFEQLMMWVDGNQVVPLEWIAVYYDNPDEVPAEKLRCDTVVSVPDNFTIPKNSEGVILTEIAGGQYATAVARVENHDFATPWYQFFNSLLQDNHYQIAAKPCFEVYLNNGTEDGYWDIEMYVPVQSK</sequence>